<evidence type="ECO:0000255" key="1">
    <source>
        <dbReference type="HAMAP-Rule" id="MF_00050"/>
    </source>
</evidence>
<evidence type="ECO:0000256" key="2">
    <source>
        <dbReference type="SAM" id="MobiDB-lite"/>
    </source>
</evidence>
<comment type="function">
    <text evidence="1">Associates with the EF-Tu.GDP complex and induces the exchange of GDP to GTP. It remains bound to the aminoacyl-tRNA.EF-Tu.GTP complex up to the GTP hydrolysis stage on the ribosome.</text>
</comment>
<comment type="subcellular location">
    <subcellularLocation>
        <location evidence="1">Cytoplasm</location>
    </subcellularLocation>
</comment>
<comment type="similarity">
    <text evidence="1">Belongs to the EF-Ts family.</text>
</comment>
<organism>
    <name type="scientific">Microcystis aeruginosa (strain NIES-843 / IAM M-2473)</name>
    <dbReference type="NCBI Taxonomy" id="449447"/>
    <lineage>
        <taxon>Bacteria</taxon>
        <taxon>Bacillati</taxon>
        <taxon>Cyanobacteriota</taxon>
        <taxon>Cyanophyceae</taxon>
        <taxon>Oscillatoriophycideae</taxon>
        <taxon>Chroococcales</taxon>
        <taxon>Microcystaceae</taxon>
        <taxon>Microcystis</taxon>
    </lineage>
</organism>
<keyword id="KW-0963">Cytoplasm</keyword>
<keyword id="KW-0251">Elongation factor</keyword>
<keyword id="KW-0648">Protein biosynthesis</keyword>
<sequence length="251" mass="27636">MAEITAQQVKELREKTGAGMMDCKRALTENAGDITKAIEWLRQKGITSAEKKASRVAAEGMIGSYIHTGSRIGVLVEVNCETDFVARREEFKKLVNDVAMQIAACPNVEYVKVADIPAEIAAKEKEIEMGRDDLANKPDNIKEKIVAGRIEKRLKELSLLDQPFIRDQNISIDELLKQAIAALGENIQVRRFQRFVLGEGIEKEETDFAAEVAAQMGQKAPEPVAAAPQVEEKAPEPAAKDNPPAKGKKKK</sequence>
<reference key="1">
    <citation type="journal article" date="2007" name="DNA Res.">
        <title>Complete genomic structure of the bloom-forming toxic cyanobacterium Microcystis aeruginosa NIES-843.</title>
        <authorList>
            <person name="Kaneko T."/>
            <person name="Nakajima N."/>
            <person name="Okamoto S."/>
            <person name="Suzuki I."/>
            <person name="Tanabe Y."/>
            <person name="Tamaoki M."/>
            <person name="Nakamura Y."/>
            <person name="Kasai F."/>
            <person name="Watanabe A."/>
            <person name="Kawashima K."/>
            <person name="Kishida Y."/>
            <person name="Ono A."/>
            <person name="Shimizu Y."/>
            <person name="Takahashi C."/>
            <person name="Minami C."/>
            <person name="Fujishiro T."/>
            <person name="Kohara M."/>
            <person name="Katoh M."/>
            <person name="Nakazaki N."/>
            <person name="Nakayama S."/>
            <person name="Yamada M."/>
            <person name="Tabata S."/>
            <person name="Watanabe M.M."/>
        </authorList>
    </citation>
    <scope>NUCLEOTIDE SEQUENCE [LARGE SCALE GENOMIC DNA]</scope>
    <source>
        <strain>NIES-843 / IAM M-247</strain>
    </source>
</reference>
<feature type="chain" id="PRO_1000074868" description="Elongation factor Ts">
    <location>
        <begin position="1"/>
        <end position="251"/>
    </location>
</feature>
<feature type="region of interest" description="Involved in Mg(2+) ion dislocation from EF-Tu" evidence="1">
    <location>
        <begin position="82"/>
        <end position="85"/>
    </location>
</feature>
<feature type="region of interest" description="Disordered" evidence="2">
    <location>
        <begin position="215"/>
        <end position="251"/>
    </location>
</feature>
<feature type="compositionally biased region" description="Low complexity" evidence="2">
    <location>
        <begin position="219"/>
        <end position="229"/>
    </location>
</feature>
<feature type="compositionally biased region" description="Basic and acidic residues" evidence="2">
    <location>
        <begin position="230"/>
        <end position="239"/>
    </location>
</feature>
<protein>
    <recommendedName>
        <fullName evidence="1">Elongation factor Ts</fullName>
        <shortName evidence="1">EF-Ts</shortName>
    </recommendedName>
</protein>
<gene>
    <name evidence="1" type="primary">tsf</name>
    <name type="ordered locus">MAE_44940</name>
</gene>
<accession>B0JTL3</accession>
<proteinExistence type="inferred from homology"/>
<dbReference type="EMBL" id="AP009552">
    <property type="protein sequence ID" value="BAG04316.1"/>
    <property type="molecule type" value="Genomic_DNA"/>
</dbReference>
<dbReference type="RefSeq" id="WP_002753383.1">
    <property type="nucleotide sequence ID" value="NC_010296.1"/>
</dbReference>
<dbReference type="SMR" id="B0JTL3"/>
<dbReference type="STRING" id="449447.MAE_44940"/>
<dbReference type="PaxDb" id="449447-MAE_44940"/>
<dbReference type="EnsemblBacteria" id="BAG04316">
    <property type="protein sequence ID" value="BAG04316"/>
    <property type="gene ID" value="MAE_44940"/>
</dbReference>
<dbReference type="KEGG" id="mar:MAE_44940"/>
<dbReference type="eggNOG" id="COG0264">
    <property type="taxonomic scope" value="Bacteria"/>
</dbReference>
<dbReference type="HOGENOM" id="CLU_047155_1_1_3"/>
<dbReference type="BioCyc" id="MAER449447:MAE_RS19475-MONOMER"/>
<dbReference type="Proteomes" id="UP000001510">
    <property type="component" value="Chromosome"/>
</dbReference>
<dbReference type="GO" id="GO:0005737">
    <property type="term" value="C:cytoplasm"/>
    <property type="evidence" value="ECO:0007669"/>
    <property type="project" value="UniProtKB-SubCell"/>
</dbReference>
<dbReference type="GO" id="GO:0003746">
    <property type="term" value="F:translation elongation factor activity"/>
    <property type="evidence" value="ECO:0007669"/>
    <property type="project" value="UniProtKB-UniRule"/>
</dbReference>
<dbReference type="CDD" id="cd14275">
    <property type="entry name" value="UBA_EF-Ts"/>
    <property type="match status" value="1"/>
</dbReference>
<dbReference type="FunFam" id="1.10.286.20:FF:000001">
    <property type="entry name" value="Elongation factor Ts"/>
    <property type="match status" value="1"/>
</dbReference>
<dbReference type="FunFam" id="1.10.8.10:FF:000001">
    <property type="entry name" value="Elongation factor Ts"/>
    <property type="match status" value="1"/>
</dbReference>
<dbReference type="Gene3D" id="1.10.286.20">
    <property type="match status" value="1"/>
</dbReference>
<dbReference type="Gene3D" id="1.10.8.10">
    <property type="entry name" value="DNA helicase RuvA subunit, C-terminal domain"/>
    <property type="match status" value="1"/>
</dbReference>
<dbReference type="Gene3D" id="3.30.479.20">
    <property type="entry name" value="Elongation factor Ts, dimerisation domain"/>
    <property type="match status" value="1"/>
</dbReference>
<dbReference type="HAMAP" id="MF_00050">
    <property type="entry name" value="EF_Ts"/>
    <property type="match status" value="1"/>
</dbReference>
<dbReference type="InterPro" id="IPR036402">
    <property type="entry name" value="EF-Ts_dimer_sf"/>
</dbReference>
<dbReference type="InterPro" id="IPR001816">
    <property type="entry name" value="Transl_elong_EFTs/EF1B"/>
</dbReference>
<dbReference type="InterPro" id="IPR014039">
    <property type="entry name" value="Transl_elong_EFTs/EF1B_dimer"/>
</dbReference>
<dbReference type="InterPro" id="IPR018101">
    <property type="entry name" value="Transl_elong_Ts_CS"/>
</dbReference>
<dbReference type="InterPro" id="IPR009060">
    <property type="entry name" value="UBA-like_sf"/>
</dbReference>
<dbReference type="NCBIfam" id="TIGR00116">
    <property type="entry name" value="tsf"/>
    <property type="match status" value="1"/>
</dbReference>
<dbReference type="PANTHER" id="PTHR11741">
    <property type="entry name" value="ELONGATION FACTOR TS"/>
    <property type="match status" value="1"/>
</dbReference>
<dbReference type="PANTHER" id="PTHR11741:SF10">
    <property type="entry name" value="POLYPROTEIN OF EF-TS, CHLOROPLASTIC"/>
    <property type="match status" value="1"/>
</dbReference>
<dbReference type="Pfam" id="PF00889">
    <property type="entry name" value="EF_TS"/>
    <property type="match status" value="1"/>
</dbReference>
<dbReference type="SUPFAM" id="SSF54713">
    <property type="entry name" value="Elongation factor Ts (EF-Ts), dimerisation domain"/>
    <property type="match status" value="1"/>
</dbReference>
<dbReference type="SUPFAM" id="SSF46934">
    <property type="entry name" value="UBA-like"/>
    <property type="match status" value="1"/>
</dbReference>
<dbReference type="PROSITE" id="PS01126">
    <property type="entry name" value="EF_TS_1"/>
    <property type="match status" value="1"/>
</dbReference>
<dbReference type="PROSITE" id="PS01127">
    <property type="entry name" value="EF_TS_2"/>
    <property type="match status" value="1"/>
</dbReference>
<name>EFTS_MICAN</name>